<evidence type="ECO:0000255" key="1">
    <source>
        <dbReference type="HAMAP-Rule" id="MF_00185"/>
    </source>
</evidence>
<keyword id="KW-0067">ATP-binding</keyword>
<keyword id="KW-0460">Magnesium</keyword>
<keyword id="KW-0547">Nucleotide-binding</keyword>
<keyword id="KW-1185">Reference proteome</keyword>
<keyword id="KW-0808">Transferase</keyword>
<keyword id="KW-0819">tRNA processing</keyword>
<proteinExistence type="inferred from homology"/>
<accession>Q04FB0</accession>
<protein>
    <recommendedName>
        <fullName evidence="1">tRNA dimethylallyltransferase</fullName>
        <ecNumber evidence="1">2.5.1.75</ecNumber>
    </recommendedName>
    <alternativeName>
        <fullName evidence="1">Dimethylallyl diphosphate:tRNA dimethylallyltransferase</fullName>
        <shortName evidence="1">DMAPP:tRNA dimethylallyltransferase</shortName>
        <shortName evidence="1">DMATase</shortName>
    </alternativeName>
    <alternativeName>
        <fullName evidence="1">Isopentenyl-diphosphate:tRNA isopentenyltransferase</fullName>
        <shortName evidence="1">IPP transferase</shortName>
        <shortName evidence="1">IPPT</shortName>
        <shortName evidence="1">IPTase</shortName>
    </alternativeName>
</protein>
<feature type="chain" id="PRO_0000377246" description="tRNA dimethylallyltransferase">
    <location>
        <begin position="1"/>
        <end position="257"/>
    </location>
</feature>
<feature type="binding site" evidence="1">
    <location>
        <begin position="15"/>
        <end position="22"/>
    </location>
    <ligand>
        <name>ATP</name>
        <dbReference type="ChEBI" id="CHEBI:30616"/>
    </ligand>
</feature>
<feature type="binding site" evidence="1">
    <location>
        <begin position="17"/>
        <end position="22"/>
    </location>
    <ligand>
        <name>substrate</name>
    </ligand>
</feature>
<feature type="site" description="Interaction with substrate tRNA" evidence="1">
    <location>
        <position position="106"/>
    </location>
</feature>
<sequence>MSDPHLKEKVVVIAGPTASGKSDLAIKIAQMIDSEIISEDAFQIYRGLDIGTAKPSKDDLAKVKHHFIDIKEVDESYSAYEFARDARIVINQISSKKKIPLIVGGSGFFLQTLLGDRRISDKDNPIVPKKAGIENRLYNALLIGLNTERSQLYDRINQRVERMFEKGIVKEAENLFRQQGNFQSKKAIGYREFAGYFANQYDLSEVETLIKRDSRRYAKRQLTYFKNQFPDMRWFDTKQITENPKLIIDLVKKFNQF</sequence>
<gene>
    <name evidence="1" type="primary">miaA</name>
    <name type="ordered locus">OEOE_0950</name>
</gene>
<name>MIAA_OENOB</name>
<reference key="1">
    <citation type="journal article" date="2006" name="Proc. Natl. Acad. Sci. U.S.A.">
        <title>Comparative genomics of the lactic acid bacteria.</title>
        <authorList>
            <person name="Makarova K.S."/>
            <person name="Slesarev A."/>
            <person name="Wolf Y.I."/>
            <person name="Sorokin A."/>
            <person name="Mirkin B."/>
            <person name="Koonin E.V."/>
            <person name="Pavlov A."/>
            <person name="Pavlova N."/>
            <person name="Karamychev V."/>
            <person name="Polouchine N."/>
            <person name="Shakhova V."/>
            <person name="Grigoriev I."/>
            <person name="Lou Y."/>
            <person name="Rohksar D."/>
            <person name="Lucas S."/>
            <person name="Huang K."/>
            <person name="Goodstein D.M."/>
            <person name="Hawkins T."/>
            <person name="Plengvidhya V."/>
            <person name="Welker D."/>
            <person name="Hughes J."/>
            <person name="Goh Y."/>
            <person name="Benson A."/>
            <person name="Baldwin K."/>
            <person name="Lee J.-H."/>
            <person name="Diaz-Muniz I."/>
            <person name="Dosti B."/>
            <person name="Smeianov V."/>
            <person name="Wechter W."/>
            <person name="Barabote R."/>
            <person name="Lorca G."/>
            <person name="Altermann E."/>
            <person name="Barrangou R."/>
            <person name="Ganesan B."/>
            <person name="Xie Y."/>
            <person name="Rawsthorne H."/>
            <person name="Tamir D."/>
            <person name="Parker C."/>
            <person name="Breidt F."/>
            <person name="Broadbent J.R."/>
            <person name="Hutkins R."/>
            <person name="O'Sullivan D."/>
            <person name="Steele J."/>
            <person name="Unlu G."/>
            <person name="Saier M.H. Jr."/>
            <person name="Klaenhammer T."/>
            <person name="Richardson P."/>
            <person name="Kozyavkin S."/>
            <person name="Weimer B.C."/>
            <person name="Mills D.A."/>
        </authorList>
    </citation>
    <scope>NUCLEOTIDE SEQUENCE [LARGE SCALE GENOMIC DNA]</scope>
    <source>
        <strain>ATCC BAA-331 / PSU-1</strain>
    </source>
</reference>
<comment type="function">
    <text evidence="1">Catalyzes the transfer of a dimethylallyl group onto the adenine at position 37 in tRNAs that read codons beginning with uridine, leading to the formation of N6-(dimethylallyl)adenosine (i(6)A).</text>
</comment>
<comment type="catalytic activity">
    <reaction evidence="1">
        <text>adenosine(37) in tRNA + dimethylallyl diphosphate = N(6)-dimethylallyladenosine(37) in tRNA + diphosphate</text>
        <dbReference type="Rhea" id="RHEA:26482"/>
        <dbReference type="Rhea" id="RHEA-COMP:10162"/>
        <dbReference type="Rhea" id="RHEA-COMP:10375"/>
        <dbReference type="ChEBI" id="CHEBI:33019"/>
        <dbReference type="ChEBI" id="CHEBI:57623"/>
        <dbReference type="ChEBI" id="CHEBI:74411"/>
        <dbReference type="ChEBI" id="CHEBI:74415"/>
        <dbReference type="EC" id="2.5.1.75"/>
    </reaction>
</comment>
<comment type="cofactor">
    <cofactor evidence="1">
        <name>Mg(2+)</name>
        <dbReference type="ChEBI" id="CHEBI:18420"/>
    </cofactor>
</comment>
<comment type="subunit">
    <text evidence="1">Monomer.</text>
</comment>
<comment type="similarity">
    <text evidence="1">Belongs to the IPP transferase family.</text>
</comment>
<organism>
    <name type="scientific">Oenococcus oeni (strain ATCC BAA-331 / PSU-1)</name>
    <dbReference type="NCBI Taxonomy" id="203123"/>
    <lineage>
        <taxon>Bacteria</taxon>
        <taxon>Bacillati</taxon>
        <taxon>Bacillota</taxon>
        <taxon>Bacilli</taxon>
        <taxon>Lactobacillales</taxon>
        <taxon>Lactobacillaceae</taxon>
        <taxon>Oenococcus</taxon>
    </lineage>
</organism>
<dbReference type="EC" id="2.5.1.75" evidence="1"/>
<dbReference type="EMBL" id="CP000411">
    <property type="protein sequence ID" value="ABJ56862.1"/>
    <property type="molecule type" value="Genomic_DNA"/>
</dbReference>
<dbReference type="RefSeq" id="WP_002816636.1">
    <property type="nucleotide sequence ID" value="NC_008528.1"/>
</dbReference>
<dbReference type="SMR" id="Q04FB0"/>
<dbReference type="STRING" id="203123.OEOE_0950"/>
<dbReference type="KEGG" id="ooe:OEOE_0950"/>
<dbReference type="eggNOG" id="COG0324">
    <property type="taxonomic scope" value="Bacteria"/>
</dbReference>
<dbReference type="HOGENOM" id="CLU_032616_0_1_9"/>
<dbReference type="Proteomes" id="UP000000774">
    <property type="component" value="Chromosome"/>
</dbReference>
<dbReference type="GO" id="GO:0005524">
    <property type="term" value="F:ATP binding"/>
    <property type="evidence" value="ECO:0007669"/>
    <property type="project" value="UniProtKB-UniRule"/>
</dbReference>
<dbReference type="GO" id="GO:0052381">
    <property type="term" value="F:tRNA dimethylallyltransferase activity"/>
    <property type="evidence" value="ECO:0007669"/>
    <property type="project" value="UniProtKB-UniRule"/>
</dbReference>
<dbReference type="GO" id="GO:0006400">
    <property type="term" value="P:tRNA modification"/>
    <property type="evidence" value="ECO:0007669"/>
    <property type="project" value="TreeGrafter"/>
</dbReference>
<dbReference type="Gene3D" id="3.40.50.300">
    <property type="entry name" value="P-loop containing nucleotide triphosphate hydrolases"/>
    <property type="match status" value="1"/>
</dbReference>
<dbReference type="HAMAP" id="MF_00185">
    <property type="entry name" value="IPP_trans"/>
    <property type="match status" value="1"/>
</dbReference>
<dbReference type="InterPro" id="IPR039657">
    <property type="entry name" value="Dimethylallyltransferase"/>
</dbReference>
<dbReference type="InterPro" id="IPR018022">
    <property type="entry name" value="IPT"/>
</dbReference>
<dbReference type="InterPro" id="IPR027417">
    <property type="entry name" value="P-loop_NTPase"/>
</dbReference>
<dbReference type="PANTHER" id="PTHR11088">
    <property type="entry name" value="TRNA DIMETHYLALLYLTRANSFERASE"/>
    <property type="match status" value="1"/>
</dbReference>
<dbReference type="PANTHER" id="PTHR11088:SF60">
    <property type="entry name" value="TRNA DIMETHYLALLYLTRANSFERASE"/>
    <property type="match status" value="1"/>
</dbReference>
<dbReference type="Pfam" id="PF01715">
    <property type="entry name" value="IPPT"/>
    <property type="match status" value="2"/>
</dbReference>
<dbReference type="SUPFAM" id="SSF52540">
    <property type="entry name" value="P-loop containing nucleoside triphosphate hydrolases"/>
    <property type="match status" value="1"/>
</dbReference>